<organism>
    <name type="scientific">Bacillus mycoides (strain KBAB4)</name>
    <name type="common">Bacillus weihenstephanensis</name>
    <dbReference type="NCBI Taxonomy" id="315730"/>
    <lineage>
        <taxon>Bacteria</taxon>
        <taxon>Bacillati</taxon>
        <taxon>Bacillota</taxon>
        <taxon>Bacilli</taxon>
        <taxon>Bacillales</taxon>
        <taxon>Bacillaceae</taxon>
        <taxon>Bacillus</taxon>
        <taxon>Bacillus cereus group</taxon>
    </lineage>
</organism>
<evidence type="ECO:0000255" key="1">
    <source>
        <dbReference type="HAMAP-Rule" id="MF_00272"/>
    </source>
</evidence>
<evidence type="ECO:0000255" key="2">
    <source>
        <dbReference type="PROSITE-ProRule" id="PRU01066"/>
    </source>
</evidence>
<feature type="chain" id="PRO_1000114497" description="Glycine cleavage system H protein">
    <location>
        <begin position="1"/>
        <end position="127"/>
    </location>
</feature>
<feature type="domain" description="Lipoyl-binding" evidence="2">
    <location>
        <begin position="22"/>
        <end position="104"/>
    </location>
</feature>
<feature type="modified residue" description="N6-lipoyllysine" evidence="1">
    <location>
        <position position="63"/>
    </location>
</feature>
<gene>
    <name evidence="1" type="primary">gcvH</name>
    <name type="ordered locus">BcerKBAB4_4814</name>
</gene>
<name>GCSH_BACMK</name>
<protein>
    <recommendedName>
        <fullName evidence="1">Glycine cleavage system H protein</fullName>
    </recommendedName>
    <alternativeName>
        <fullName evidence="1">Octanoyl/lipoyl carrier protein</fullName>
    </alternativeName>
</protein>
<keyword id="KW-0450">Lipoyl</keyword>
<dbReference type="EMBL" id="CP000903">
    <property type="protein sequence ID" value="ABY45963.1"/>
    <property type="molecule type" value="Genomic_DNA"/>
</dbReference>
<dbReference type="RefSeq" id="WP_000026895.1">
    <property type="nucleotide sequence ID" value="NZ_CAKMRX030000022.1"/>
</dbReference>
<dbReference type="SMR" id="A9VNZ4"/>
<dbReference type="GeneID" id="92886432"/>
<dbReference type="KEGG" id="bwe:BcerKBAB4_4814"/>
<dbReference type="eggNOG" id="COG0509">
    <property type="taxonomic scope" value="Bacteria"/>
</dbReference>
<dbReference type="HOGENOM" id="CLU_097408_2_2_9"/>
<dbReference type="Proteomes" id="UP000002154">
    <property type="component" value="Chromosome"/>
</dbReference>
<dbReference type="GO" id="GO:0005829">
    <property type="term" value="C:cytosol"/>
    <property type="evidence" value="ECO:0007669"/>
    <property type="project" value="TreeGrafter"/>
</dbReference>
<dbReference type="GO" id="GO:0005960">
    <property type="term" value="C:glycine cleavage complex"/>
    <property type="evidence" value="ECO:0007669"/>
    <property type="project" value="InterPro"/>
</dbReference>
<dbReference type="GO" id="GO:0019464">
    <property type="term" value="P:glycine decarboxylation via glycine cleavage system"/>
    <property type="evidence" value="ECO:0007669"/>
    <property type="project" value="UniProtKB-UniRule"/>
</dbReference>
<dbReference type="CDD" id="cd06848">
    <property type="entry name" value="GCS_H"/>
    <property type="match status" value="1"/>
</dbReference>
<dbReference type="Gene3D" id="2.40.50.100">
    <property type="match status" value="1"/>
</dbReference>
<dbReference type="HAMAP" id="MF_00272">
    <property type="entry name" value="GcvH"/>
    <property type="match status" value="1"/>
</dbReference>
<dbReference type="InterPro" id="IPR003016">
    <property type="entry name" value="2-oxoA_DH_lipoyl-BS"/>
</dbReference>
<dbReference type="InterPro" id="IPR000089">
    <property type="entry name" value="Biotin_lipoyl"/>
</dbReference>
<dbReference type="InterPro" id="IPR002930">
    <property type="entry name" value="GCV_H"/>
</dbReference>
<dbReference type="InterPro" id="IPR033753">
    <property type="entry name" value="GCV_H/Fam206"/>
</dbReference>
<dbReference type="InterPro" id="IPR017453">
    <property type="entry name" value="GCV_H_sub"/>
</dbReference>
<dbReference type="InterPro" id="IPR011053">
    <property type="entry name" value="Single_hybrid_motif"/>
</dbReference>
<dbReference type="NCBIfam" id="TIGR00527">
    <property type="entry name" value="gcvH"/>
    <property type="match status" value="1"/>
</dbReference>
<dbReference type="NCBIfam" id="NF002270">
    <property type="entry name" value="PRK01202.1"/>
    <property type="match status" value="1"/>
</dbReference>
<dbReference type="PANTHER" id="PTHR11715">
    <property type="entry name" value="GLYCINE CLEAVAGE SYSTEM H PROTEIN"/>
    <property type="match status" value="1"/>
</dbReference>
<dbReference type="PANTHER" id="PTHR11715:SF3">
    <property type="entry name" value="GLYCINE CLEAVAGE SYSTEM H PROTEIN-RELATED"/>
    <property type="match status" value="1"/>
</dbReference>
<dbReference type="Pfam" id="PF01597">
    <property type="entry name" value="GCV_H"/>
    <property type="match status" value="1"/>
</dbReference>
<dbReference type="SUPFAM" id="SSF51230">
    <property type="entry name" value="Single hybrid motif"/>
    <property type="match status" value="1"/>
</dbReference>
<dbReference type="PROSITE" id="PS50968">
    <property type="entry name" value="BIOTINYL_LIPOYL"/>
    <property type="match status" value="1"/>
</dbReference>
<dbReference type="PROSITE" id="PS00189">
    <property type="entry name" value="LIPOYL"/>
    <property type="match status" value="1"/>
</dbReference>
<accession>A9VNZ4</accession>
<reference key="1">
    <citation type="journal article" date="2008" name="Chem. Biol. Interact.">
        <title>Extending the Bacillus cereus group genomics to putative food-borne pathogens of different toxicity.</title>
        <authorList>
            <person name="Lapidus A."/>
            <person name="Goltsman E."/>
            <person name="Auger S."/>
            <person name="Galleron N."/>
            <person name="Segurens B."/>
            <person name="Dossat C."/>
            <person name="Land M.L."/>
            <person name="Broussolle V."/>
            <person name="Brillard J."/>
            <person name="Guinebretiere M.-H."/>
            <person name="Sanchis V."/>
            <person name="Nguen-the C."/>
            <person name="Lereclus D."/>
            <person name="Richardson P."/>
            <person name="Wincker P."/>
            <person name="Weissenbach J."/>
            <person name="Ehrlich S.D."/>
            <person name="Sorokin A."/>
        </authorList>
    </citation>
    <scope>NUCLEOTIDE SEQUENCE [LARGE SCALE GENOMIC DNA]</scope>
    <source>
        <strain>KBAB4</strain>
    </source>
</reference>
<comment type="function">
    <text evidence="1">The glycine cleavage system catalyzes the degradation of glycine. The H protein shuttles the methylamine group of glycine from the P protein to the T protein.</text>
</comment>
<comment type="function">
    <text evidence="1">Is also involved in protein lipoylation via its role as an octanoyl/lipoyl carrier protein intermediate.</text>
</comment>
<comment type="cofactor">
    <cofactor evidence="1">
        <name>(R)-lipoate</name>
        <dbReference type="ChEBI" id="CHEBI:83088"/>
    </cofactor>
    <text evidence="1">Binds 1 lipoyl cofactor covalently.</text>
</comment>
<comment type="subunit">
    <text evidence="1">The glycine cleavage system is composed of four proteins: P, T, L and H.</text>
</comment>
<comment type="similarity">
    <text evidence="1">Belongs to the GcvH family.</text>
</comment>
<sequence length="127" mass="13928">MSIPNNLRYSEEHEWVKTEGNAVVIGITHFAQGELGDIVFVELPEVGATIQADEPFGSVESVKTVSELYAPVSGKVVAVNEELSDQPELVNESPYEGAWMVKVELSDASQVEKLLTAEKYAEMTNQD</sequence>
<proteinExistence type="inferred from homology"/>